<evidence type="ECO:0000250" key="1">
    <source>
        <dbReference type="UniProtKB" id="Q9Y8A5"/>
    </source>
</evidence>
<evidence type="ECO:0000255" key="2"/>
<evidence type="ECO:0000255" key="3">
    <source>
        <dbReference type="PROSITE-ProRule" id="PRU00258"/>
    </source>
</evidence>
<evidence type="ECO:0000255" key="4">
    <source>
        <dbReference type="PROSITE-ProRule" id="PRU01348"/>
    </source>
</evidence>
<evidence type="ECO:0000255" key="5">
    <source>
        <dbReference type="PROSITE-ProRule" id="PRU01363"/>
    </source>
</evidence>
<evidence type="ECO:0000255" key="6">
    <source>
        <dbReference type="PROSITE-ProRule" id="PRU10022"/>
    </source>
</evidence>
<evidence type="ECO:0000256" key="7">
    <source>
        <dbReference type="SAM" id="MobiDB-lite"/>
    </source>
</evidence>
<evidence type="ECO:0000269" key="8">
    <source>
    </source>
</evidence>
<evidence type="ECO:0000269" key="9">
    <source>
    </source>
</evidence>
<evidence type="ECO:0000269" key="10">
    <source>
    </source>
</evidence>
<evidence type="ECO:0000269" key="11">
    <source>
    </source>
</evidence>
<evidence type="ECO:0000269" key="12">
    <source>
    </source>
</evidence>
<evidence type="ECO:0000269" key="13">
    <source>
    </source>
</evidence>
<evidence type="ECO:0000269" key="14">
    <source>
    </source>
</evidence>
<evidence type="ECO:0000269" key="15">
    <source>
    </source>
</evidence>
<evidence type="ECO:0000269" key="16">
    <source>
    </source>
</evidence>
<evidence type="ECO:0000269" key="17">
    <source>
    </source>
</evidence>
<evidence type="ECO:0000269" key="18">
    <source>
    </source>
</evidence>
<evidence type="ECO:0000269" key="19">
    <source>
    </source>
</evidence>
<evidence type="ECO:0000269" key="20">
    <source>
    </source>
</evidence>
<evidence type="ECO:0000269" key="21">
    <source>
    </source>
</evidence>
<evidence type="ECO:0000269" key="22">
    <source>
    </source>
</evidence>
<evidence type="ECO:0000269" key="23">
    <source>
    </source>
</evidence>
<evidence type="ECO:0000269" key="24">
    <source>
    </source>
</evidence>
<evidence type="ECO:0000269" key="25">
    <source>
    </source>
</evidence>
<evidence type="ECO:0000305" key="26"/>
<evidence type="ECO:0000305" key="27">
    <source>
    </source>
</evidence>
<sequence length="3038" mass="335023">MAQSMYPNEPIVVVGSGCRFPGDANTPSKLWELLQHPRDVQSRIPKERFDVDTFYHPDGKHHGRTNAPYAYVLQDDLGAFDAAFFNIQAGEAESMDPQHRLLLETVYEAVTNAGMRIQDLQGTSTAVYVGVMTHDYETVSTRDLENIPTYSATGVAVSVASNRISYFFDWHGPSMTIDTACSSSLVAVHLAVQQLRTGQSSMAIAAGANLILGPMTFVLESKLSMLSPSGRSRMWDAGADGYARGEAVCSVVLKTLSQALRDGDTIECVIRETGVNQDGRTTGITMPNHSAQEALIKATYAQAGLDITKAEDRCQFFEAHGTGTPAGDPQEAEAIATAFFGHEQVARSDGNERAPLFVGSAKTVVGHTEGTAGLAGLMKASFAVRHGVIPPNLLFDKISPRVAPFYKNLRIPTEATQWPALPPGQPRRASVNSFGFGGTNAHAIIEEYMEPEQNQLRVSNNEDCPPMTGVLSLPLVLSAKSQRSLKIMMEEMLQFLETHPEIHLHDLTWSLLRKRSVLPFRRAIVGHSHETIRRALEDAIEDGIVSSDFTTEVRGQPSVLGIFTGQGAQWPGMLKNLIEASPYVRSIVRELDDSLQSLPEKYRPSWTLLDQFMLEGEASNVQYASFSQPLCCAVQIVLVRLLEAARIRFTAVVGHSSGEIACAFAAGLISASVAIRIAYLRGVVSAGGARGTPGAMLAAGMSFEEAQEICELDAFEGRICVAASNSPDSVTFSGDANAIDHLKSMLEDESTFARLLRVDTAYHSHHMLPCADPYMQALEECGCAVADAGSPAGSVPWYSSVNAENRQMAARDVTAEYWKDNLVSPVLFSHAVQRAVVTHKALDIGIEVGCHPALKSPCVATIKDVLSGVDLAYTGCLERGKNDLDTFSRALAYLWERFGASSFDADEFMRAVAPDRPCMSVSKLLPAYPWDHSRRYWVESRATRHHLRGPKPHLLLGKLSEYSTPLSFQWLNFVRPRDIEWLDGHALQGQTVFPAAGYIVMAMEAALMIAGTHAKQVQLLEILDMSIDKAVIFDDEDSLVELNLTADVSRNAGEAGSMTISFKIDSCLSKEGNLSLSAKGQLALMIGDVNSRTTSASDQHHLPPPEEEHPHMNRVNIKAFYHELGLMGYNYSKDFRRLHNMQRADLRASGTIDFIPLMDEGNGCPLLLHPASLDVAFQTVIGAYSSPGDRRLRCLYVPTHVDRITLVPSLCLATAESGCEKVAFNTINTYDKGDYLSGDIAVFDAEQTTLFQVENITFKPFSPPDASTDHAMFARWSWGPLTPDSLLDNPEYWATAQDKEAIPIIERIVYFYIRSFLNQLTLEERQKAAFHLQKQIEWLEQVLASAKEGRHLWYDPGWENDTEAQIEHLCTANSYHPHVRLVQRVGQHLLPTVRSNGNPFDLLDHDGLLTEFYTNTLSFGPALHYARELVAQIAHRYQSMDILEIGAGTGGATKYVLATPQLGFNSYTYTDISTGFFEQAREQFAPFEDRMVFEPLDIRRSPAEQGFETHAYDLIIASNVLHATPDLEKTMAHARSLLKPGGQMVILEITHKEHTRLGFIFGLFADWWAGVDDGRCTEPFVSFDRWDAILKRVGFSGVDSRTTDRDANLFPTSVFSTHAIDATVEYLDAPLASSGTVKDSYPPLVVVGGQTPKSQRLLNDIKAIMPPRPLQTYKRLVDLLDAEELPMKSTFVMLTELDEELFAGLTEETFEATKLLLTYSSNTVWLTENAWVQHPHQASTIGMLRSIRREHPDLGVHVLDVDAVETFDATFLVEQVLRLEEHTDELASSTTWTQEPEVSWCKGRPWIPRLKRDLARNNRMNSSRRPIYEMIDSSRAPVALQTAPDSSSYFLESAETWFVPESVRQMETKTVYVHFSCPHALRVGQLGFFYLVQGHVQEGNREVPVVALAERNASIVHVRPDYIYTEADNNLSEGGGSLIVTVLAAAVLAETVISTAKSLGVTDSILVLNPPSICGQMLLHAGEEIGLQVHLATTSGNRSSVSAGDAKSWLTLHARDTDWHLRRVLPRGVQAFVDLSADQSCECLTQRMMKVLMPGCAHYRAADLFTDTVSTELHRGLRHQASLPAAYWEHVVSLARQGLSSVSEGWEVMPCTQFAAHADKTRPDLSTVISWPRESDKATLPTRVRSIDAETLFAADKTYLLVGLTGDLGRSLGRWMVQHGACHIVLTSRNPQVNPKWLAHVEELGGRVTVLSMDVTSENSVDAGLAKIKDLHLPPVGGIAFGPLVLQDVMLKNMELPMMEMVLNPKVEGVRILHEKFSDPTSSNPLDFFVMFSSIVAVMGNPGQANYSAANCYLQALAQQRVASGLAASTIDIGAVYGVGFVTRAELEEDFNAIRFMFDSVEEHELHTLFAEAVVAGRRAVHQQEQQRKFATVLDMADLELTTGIPPLDPALKDRITFFDDPRIGNLKIPEYRGAKAGEGAAGSKGSVKEQLLQATNLDQVRQIVIDGLSAKLQVTLQIPDGESVHPTISLIDQGVDSLGAVTVGTWFSKQLYLDLPLLKVLGGASIADLADEAAARLPPSSIPLVAATDGGAESTDNTSENEVSGREDTDLSAAATITEPSSADEDDTEPGDEDVPRSHHPLSLGQEYSWRIQQGAEDPTVFNNTIGMFMKGPIDLKRLYKALRAVLRRHEIFRTGFANVDENGMAQLVFGQTKNKVQTIQVSDRAGAEEGYRQLVQTRYNPAAGDTLRLVDFFWGQDDHLLVVAYHRLVGDGSTTENIFVEAGQLYDGRSLSPRVPQFADLAARQRAMLEDGRMEEDLAYWKEMHQRPSSIPVLPLMRPLVGNSSTSNTPNFQHCGSWQQHEAVARLDPMVAFRIKERSRKHKATPMQFYLAAYQVLLARLTDSTDLTVGLADTNRATVDEMAAMGFFANLLPLRFRDFRPHITFGEHLIATRDLVREALQHARVPYGVLLDQLGLEVPVPTSNQPAPLLQAVFDYKQGQAESGTIGGAKITEVIATRERTPYDVVLEMSDDPTKDPLLTAKLQSSRYEAHHPQAFLESYMSLLSMFSMNPALKLA</sequence>
<gene>
    <name type="primary">lovB</name>
    <name type="ORF">ATEG_09961</name>
</gene>
<dbReference type="EC" id="2.3.1.161" evidence="1"/>
<dbReference type="EMBL" id="CH476609">
    <property type="protein sequence ID" value="EAU29410.1"/>
    <property type="status" value="ALT_SEQ"/>
    <property type="molecule type" value="Genomic_DNA"/>
</dbReference>
<dbReference type="RefSeq" id="XP_001209263.1">
    <property type="nucleotide sequence ID" value="XM_001209263.1"/>
</dbReference>
<dbReference type="SMR" id="Q0C8M3"/>
<dbReference type="STRING" id="341663.Q0C8M3"/>
<dbReference type="GeneID" id="4319607"/>
<dbReference type="eggNOG" id="KOG1202">
    <property type="taxonomic scope" value="Eukaryota"/>
</dbReference>
<dbReference type="OrthoDB" id="329835at2759"/>
<dbReference type="UniPathway" id="UPA00875"/>
<dbReference type="Proteomes" id="UP000007963">
    <property type="component" value="Unassembled WGS sequence"/>
</dbReference>
<dbReference type="GO" id="GO:0004315">
    <property type="term" value="F:3-oxoacyl-[acyl-carrier-protein] synthase activity"/>
    <property type="evidence" value="ECO:0007669"/>
    <property type="project" value="InterPro"/>
</dbReference>
<dbReference type="GO" id="GO:0004312">
    <property type="term" value="F:fatty acid synthase activity"/>
    <property type="evidence" value="ECO:0007669"/>
    <property type="project" value="TreeGrafter"/>
</dbReference>
<dbReference type="GO" id="GO:0050637">
    <property type="term" value="F:lovastatin nonaketide synthase activity"/>
    <property type="evidence" value="ECO:0007669"/>
    <property type="project" value="UniProtKB-EC"/>
</dbReference>
<dbReference type="GO" id="GO:0008168">
    <property type="term" value="F:methyltransferase activity"/>
    <property type="evidence" value="ECO:0007669"/>
    <property type="project" value="UniProtKB-KW"/>
</dbReference>
<dbReference type="GO" id="GO:0016491">
    <property type="term" value="F:oxidoreductase activity"/>
    <property type="evidence" value="ECO:0007669"/>
    <property type="project" value="UniProtKB-KW"/>
</dbReference>
<dbReference type="GO" id="GO:0031177">
    <property type="term" value="F:phosphopantetheine binding"/>
    <property type="evidence" value="ECO:0007669"/>
    <property type="project" value="InterPro"/>
</dbReference>
<dbReference type="GO" id="GO:0006633">
    <property type="term" value="P:fatty acid biosynthetic process"/>
    <property type="evidence" value="ECO:0007669"/>
    <property type="project" value="InterPro"/>
</dbReference>
<dbReference type="GO" id="GO:0140735">
    <property type="term" value="P:lovastatin biosynthetic process"/>
    <property type="evidence" value="ECO:0000250"/>
    <property type="project" value="GO_Central"/>
</dbReference>
<dbReference type="GO" id="GO:0032259">
    <property type="term" value="P:methylation"/>
    <property type="evidence" value="ECO:0007669"/>
    <property type="project" value="UniProtKB-KW"/>
</dbReference>
<dbReference type="CDD" id="cd02440">
    <property type="entry name" value="AdoMet_MTases"/>
    <property type="match status" value="1"/>
</dbReference>
<dbReference type="CDD" id="cd19532">
    <property type="entry name" value="C_PKS-NRPS"/>
    <property type="match status" value="1"/>
</dbReference>
<dbReference type="CDD" id="cd00833">
    <property type="entry name" value="PKS"/>
    <property type="match status" value="1"/>
</dbReference>
<dbReference type="FunFam" id="3.40.47.10:FF:000019">
    <property type="entry name" value="Polyketide synthase type I"/>
    <property type="match status" value="1"/>
</dbReference>
<dbReference type="Gene3D" id="3.30.70.3290">
    <property type="match status" value="1"/>
</dbReference>
<dbReference type="Gene3D" id="3.40.47.10">
    <property type="match status" value="1"/>
</dbReference>
<dbReference type="Gene3D" id="3.30.559.10">
    <property type="entry name" value="Chloramphenicol acetyltransferase-like domain"/>
    <property type="match status" value="1"/>
</dbReference>
<dbReference type="Gene3D" id="3.40.366.10">
    <property type="entry name" value="Malonyl-Coenzyme A Acyl Carrier Protein, domain 2"/>
    <property type="match status" value="1"/>
</dbReference>
<dbReference type="Gene3D" id="3.40.50.720">
    <property type="entry name" value="NAD(P)-binding Rossmann-like Domain"/>
    <property type="match status" value="2"/>
</dbReference>
<dbReference type="Gene3D" id="3.30.559.30">
    <property type="entry name" value="Nonribosomal peptide synthetase, condensation domain"/>
    <property type="match status" value="1"/>
</dbReference>
<dbReference type="Gene3D" id="3.10.129.110">
    <property type="entry name" value="Polyketide synthase dehydratase"/>
    <property type="match status" value="1"/>
</dbReference>
<dbReference type="Gene3D" id="3.40.50.150">
    <property type="entry name" value="Vaccinia Virus protein VP39"/>
    <property type="match status" value="1"/>
</dbReference>
<dbReference type="InterPro" id="IPR001227">
    <property type="entry name" value="Ac_transferase_dom_sf"/>
</dbReference>
<dbReference type="InterPro" id="IPR036736">
    <property type="entry name" value="ACP-like_sf"/>
</dbReference>
<dbReference type="InterPro" id="IPR014043">
    <property type="entry name" value="Acyl_transferase_dom"/>
</dbReference>
<dbReference type="InterPro" id="IPR016035">
    <property type="entry name" value="Acyl_Trfase/lysoPLipase"/>
</dbReference>
<dbReference type="InterPro" id="IPR023213">
    <property type="entry name" value="CAT-like_dom_sf"/>
</dbReference>
<dbReference type="InterPro" id="IPR001242">
    <property type="entry name" value="Condensatn"/>
</dbReference>
<dbReference type="InterPro" id="IPR018201">
    <property type="entry name" value="Ketoacyl_synth_AS"/>
</dbReference>
<dbReference type="InterPro" id="IPR014031">
    <property type="entry name" value="Ketoacyl_synth_C"/>
</dbReference>
<dbReference type="InterPro" id="IPR014030">
    <property type="entry name" value="Ketoacyl_synth_N"/>
</dbReference>
<dbReference type="InterPro" id="IPR016036">
    <property type="entry name" value="Malonyl_transacylase_ACP-bd"/>
</dbReference>
<dbReference type="InterPro" id="IPR013217">
    <property type="entry name" value="Methyltransf_12"/>
</dbReference>
<dbReference type="InterPro" id="IPR036291">
    <property type="entry name" value="NAD(P)-bd_dom_sf"/>
</dbReference>
<dbReference type="InterPro" id="IPR032821">
    <property type="entry name" value="PKS_assoc"/>
</dbReference>
<dbReference type="InterPro" id="IPR020841">
    <property type="entry name" value="PKS_Beta-ketoAc_synthase_dom"/>
</dbReference>
<dbReference type="InterPro" id="IPR042104">
    <property type="entry name" value="PKS_dehydratase_sf"/>
</dbReference>
<dbReference type="InterPro" id="IPR020807">
    <property type="entry name" value="PKS_DH"/>
</dbReference>
<dbReference type="InterPro" id="IPR049551">
    <property type="entry name" value="PKS_DH_C"/>
</dbReference>
<dbReference type="InterPro" id="IPR049552">
    <property type="entry name" value="PKS_DH_N"/>
</dbReference>
<dbReference type="InterPro" id="IPR013968">
    <property type="entry name" value="PKS_KR"/>
</dbReference>
<dbReference type="InterPro" id="IPR049900">
    <property type="entry name" value="PKS_mFAS_DH"/>
</dbReference>
<dbReference type="InterPro" id="IPR050091">
    <property type="entry name" value="PKS_NRPS_Biosynth_Enz"/>
</dbReference>
<dbReference type="InterPro" id="IPR020806">
    <property type="entry name" value="PKS_PP-bd"/>
</dbReference>
<dbReference type="InterPro" id="IPR009081">
    <property type="entry name" value="PP-bd_ACP"/>
</dbReference>
<dbReference type="InterPro" id="IPR029063">
    <property type="entry name" value="SAM-dependent_MTases_sf"/>
</dbReference>
<dbReference type="InterPro" id="IPR016039">
    <property type="entry name" value="Thiolase-like"/>
</dbReference>
<dbReference type="PANTHER" id="PTHR43775">
    <property type="entry name" value="FATTY ACID SYNTHASE"/>
    <property type="match status" value="1"/>
</dbReference>
<dbReference type="PANTHER" id="PTHR43775:SF20">
    <property type="entry name" value="HYBRID PKS-NRPS SYNTHETASE APDA"/>
    <property type="match status" value="1"/>
</dbReference>
<dbReference type="Pfam" id="PF00698">
    <property type="entry name" value="Acyl_transf_1"/>
    <property type="match status" value="1"/>
</dbReference>
<dbReference type="Pfam" id="PF00668">
    <property type="entry name" value="Condensation"/>
    <property type="match status" value="1"/>
</dbReference>
<dbReference type="Pfam" id="PF16197">
    <property type="entry name" value="KAsynt_C_assoc"/>
    <property type="match status" value="1"/>
</dbReference>
<dbReference type="Pfam" id="PF00109">
    <property type="entry name" value="ketoacyl-synt"/>
    <property type="match status" value="1"/>
</dbReference>
<dbReference type="Pfam" id="PF02801">
    <property type="entry name" value="Ketoacyl-synt_C"/>
    <property type="match status" value="1"/>
</dbReference>
<dbReference type="Pfam" id="PF08659">
    <property type="entry name" value="KR"/>
    <property type="match status" value="1"/>
</dbReference>
<dbReference type="Pfam" id="PF08242">
    <property type="entry name" value="Methyltransf_12"/>
    <property type="match status" value="1"/>
</dbReference>
<dbReference type="Pfam" id="PF21089">
    <property type="entry name" value="PKS_DH_N"/>
    <property type="match status" value="1"/>
</dbReference>
<dbReference type="Pfam" id="PF00550">
    <property type="entry name" value="PP-binding"/>
    <property type="match status" value="1"/>
</dbReference>
<dbReference type="Pfam" id="PF14765">
    <property type="entry name" value="PS-DH"/>
    <property type="match status" value="1"/>
</dbReference>
<dbReference type="SMART" id="SM00827">
    <property type="entry name" value="PKS_AT"/>
    <property type="match status" value="1"/>
</dbReference>
<dbReference type="SMART" id="SM00826">
    <property type="entry name" value="PKS_DH"/>
    <property type="match status" value="1"/>
</dbReference>
<dbReference type="SMART" id="SM00822">
    <property type="entry name" value="PKS_KR"/>
    <property type="match status" value="1"/>
</dbReference>
<dbReference type="SMART" id="SM00825">
    <property type="entry name" value="PKS_KS"/>
    <property type="match status" value="1"/>
</dbReference>
<dbReference type="SMART" id="SM00823">
    <property type="entry name" value="PKS_PP"/>
    <property type="match status" value="1"/>
</dbReference>
<dbReference type="SUPFAM" id="SSF47336">
    <property type="entry name" value="ACP-like"/>
    <property type="match status" value="1"/>
</dbReference>
<dbReference type="SUPFAM" id="SSF52777">
    <property type="entry name" value="CoA-dependent acyltransferases"/>
    <property type="match status" value="2"/>
</dbReference>
<dbReference type="SUPFAM" id="SSF52151">
    <property type="entry name" value="FabD/lysophospholipase-like"/>
    <property type="match status" value="1"/>
</dbReference>
<dbReference type="SUPFAM" id="SSF51735">
    <property type="entry name" value="NAD(P)-binding Rossmann-fold domains"/>
    <property type="match status" value="2"/>
</dbReference>
<dbReference type="SUPFAM" id="SSF55048">
    <property type="entry name" value="Probable ACP-binding domain of malonyl-CoA ACP transacylase"/>
    <property type="match status" value="1"/>
</dbReference>
<dbReference type="SUPFAM" id="SSF53335">
    <property type="entry name" value="S-adenosyl-L-methionine-dependent methyltransferases"/>
    <property type="match status" value="1"/>
</dbReference>
<dbReference type="SUPFAM" id="SSF53901">
    <property type="entry name" value="Thiolase-like"/>
    <property type="match status" value="1"/>
</dbReference>
<dbReference type="PROSITE" id="PS50075">
    <property type="entry name" value="CARRIER"/>
    <property type="match status" value="1"/>
</dbReference>
<dbReference type="PROSITE" id="PS00606">
    <property type="entry name" value="KS3_1"/>
    <property type="match status" value="1"/>
</dbReference>
<dbReference type="PROSITE" id="PS52004">
    <property type="entry name" value="KS3_2"/>
    <property type="match status" value="1"/>
</dbReference>
<dbReference type="PROSITE" id="PS52019">
    <property type="entry name" value="PKS_MFAS_DH"/>
    <property type="match status" value="1"/>
</dbReference>
<protein>
    <recommendedName>
        <fullName>Lovastatin nonaketide synthase, polyketide synthase component</fullName>
        <shortName>LNKS</shortName>
        <ecNumber evidence="1">2.3.1.161</ecNumber>
    </recommendedName>
</protein>
<name>LOVB_ASPTN</name>
<feature type="chain" id="PRO_0000283708" description="Lovastatin nonaketide synthase, polyketide synthase component">
    <location>
        <begin position="1"/>
        <end position="3038"/>
    </location>
</feature>
<feature type="domain" description="Ketosynthase family 3 (KS3)" evidence="4 27">
    <location>
        <begin position="8"/>
        <end position="447"/>
    </location>
</feature>
<feature type="domain" description="PKS/mFAS DH" evidence="5">
    <location>
        <begin position="953"/>
        <end position="1267"/>
    </location>
</feature>
<feature type="domain" description="Carrier" evidence="3 27">
    <location>
        <begin position="2463"/>
        <end position="2538"/>
    </location>
</feature>
<feature type="region of interest" description="Malonyl-CoA:ACP transacylase (MAT) domain" evidence="2 27">
    <location>
        <begin position="562"/>
        <end position="889"/>
    </location>
</feature>
<feature type="region of interest" description="LovC-binding" evidence="1">
    <location>
        <begin position="695"/>
        <end position="757"/>
    </location>
</feature>
<feature type="region of interest" description="Dehydratase (DH) domain" evidence="2 27">
    <location>
        <begin position="953"/>
        <end position="1263"/>
    </location>
</feature>
<feature type="region of interest" description="N-terminal hotdog fold" evidence="5">
    <location>
        <begin position="953"/>
        <end position="1089"/>
    </location>
</feature>
<feature type="region of interest" description="C-terminal hotdog fold" evidence="5">
    <location>
        <begin position="1107"/>
        <end position="1267"/>
    </location>
</feature>
<feature type="region of interest" description="Methyltransferase (CMet) domain" evidence="2 27">
    <location>
        <begin position="1443"/>
        <end position="1543"/>
    </location>
</feature>
<feature type="region of interest" description="Ketoreductase (KR) domain" evidence="2 27">
    <location>
        <begin position="2139"/>
        <end position="2437"/>
    </location>
</feature>
<feature type="region of interest" description="Disordered" evidence="7">
    <location>
        <begin position="2546"/>
        <end position="2602"/>
    </location>
</feature>
<feature type="region of interest" description="Inactive Condensation domain" evidence="19">
    <location>
        <begin position="2602"/>
        <end position="2952"/>
    </location>
</feature>
<feature type="compositionally biased region" description="Acidic residues" evidence="7">
    <location>
        <begin position="2583"/>
        <end position="2594"/>
    </location>
</feature>
<feature type="active site" description="For beta-ketoacyl synthase activity" evidence="4">
    <location>
        <position position="181"/>
    </location>
</feature>
<feature type="active site" description="For beta-ketoacyl synthase activity" evidence="4">
    <location>
        <position position="320"/>
    </location>
</feature>
<feature type="active site" description="For beta-ketoacyl synthase activity" evidence="4">
    <location>
        <position position="367"/>
    </location>
</feature>
<feature type="active site" description="For malonyltransferase activity" evidence="6">
    <location>
        <position position="656"/>
    </location>
</feature>
<feature type="active site" description="Proton acceptor; for dehydratase activity" evidence="5">
    <location>
        <position position="985"/>
    </location>
</feature>
<feature type="active site" description="Proton donor; for dehydratase activity" evidence="5">
    <location>
        <position position="1174"/>
    </location>
</feature>
<feature type="modified residue" description="O-(pantetheine 4'-phosphoryl)serine" evidence="3">
    <location>
        <position position="2498"/>
    </location>
</feature>
<organism>
    <name type="scientific">Aspergillus terreus (strain NIH 2624 / FGSC A1156)</name>
    <dbReference type="NCBI Taxonomy" id="341663"/>
    <lineage>
        <taxon>Eukaryota</taxon>
        <taxon>Fungi</taxon>
        <taxon>Dikarya</taxon>
        <taxon>Ascomycota</taxon>
        <taxon>Pezizomycotina</taxon>
        <taxon>Eurotiomycetes</taxon>
        <taxon>Eurotiomycetidae</taxon>
        <taxon>Eurotiales</taxon>
        <taxon>Aspergillaceae</taxon>
        <taxon>Aspergillus</taxon>
        <taxon>Aspergillus subgen. Circumdati</taxon>
    </lineage>
</organism>
<keyword id="KW-0012">Acyltransferase</keyword>
<keyword id="KW-0489">Methyltransferase</keyword>
<keyword id="KW-0511">Multifunctional enzyme</keyword>
<keyword id="KW-0521">NADP</keyword>
<keyword id="KW-0560">Oxidoreductase</keyword>
<keyword id="KW-0596">Phosphopantetheine</keyword>
<keyword id="KW-0597">Phosphoprotein</keyword>
<keyword id="KW-1185">Reference proteome</keyword>
<keyword id="KW-0949">S-adenosyl-L-methionine</keyword>
<keyword id="KW-0808">Transferase</keyword>
<proteinExistence type="evidence at protein level"/>
<accession>Q0C8M3</accession>
<reference key="1">
    <citation type="submission" date="2005-09" db="EMBL/GenBank/DDBJ databases">
        <title>Annotation of the Aspergillus terreus NIH2624 genome.</title>
        <authorList>
            <person name="Birren B.W."/>
            <person name="Lander E.S."/>
            <person name="Galagan J.E."/>
            <person name="Nusbaum C."/>
            <person name="Devon K."/>
            <person name="Henn M."/>
            <person name="Ma L.-J."/>
            <person name="Jaffe D.B."/>
            <person name="Butler J."/>
            <person name="Alvarez P."/>
            <person name="Gnerre S."/>
            <person name="Grabherr M."/>
            <person name="Kleber M."/>
            <person name="Mauceli E.W."/>
            <person name="Brockman W."/>
            <person name="Rounsley S."/>
            <person name="Young S.K."/>
            <person name="LaButti K."/>
            <person name="Pushparaj V."/>
            <person name="DeCaprio D."/>
            <person name="Crawford M."/>
            <person name="Koehrsen M."/>
            <person name="Engels R."/>
            <person name="Montgomery P."/>
            <person name="Pearson M."/>
            <person name="Howarth C."/>
            <person name="Larson L."/>
            <person name="Luoma S."/>
            <person name="White J."/>
            <person name="Alvarado L."/>
            <person name="Kodira C.D."/>
            <person name="Zeng Q."/>
            <person name="Oleary S."/>
            <person name="Yandava C."/>
            <person name="Denning D.W."/>
            <person name="Nierman W.C."/>
            <person name="Milne T."/>
            <person name="Madden K."/>
        </authorList>
    </citation>
    <scope>NUCLEOTIDE SEQUENCE [LARGE SCALE GENOMIC DNA]</scope>
    <source>
        <strain>NIH 2624 / FGSC A1156</strain>
    </source>
</reference>
<reference key="2">
    <citation type="journal article" date="1999" name="Chem. Biol.">
        <title>Lovastatin biosynthesis in Aspergillus terreus: characterization of blocked mutants, enzyme activities and a multifunctional polyketide synthase gene.</title>
        <authorList>
            <person name="Hendrickson L."/>
            <person name="Davis C.R."/>
            <person name="Roach C."/>
            <person name="Nguyen D.K."/>
            <person name="Aldrich T."/>
            <person name="McAda P.C."/>
            <person name="Reeves C.D."/>
        </authorList>
    </citation>
    <scope>FUNCTION</scope>
    <scope>CATALYTIC ACTIVITY</scope>
    <scope>PATHWAY</scope>
</reference>
<reference key="3">
    <citation type="journal article" date="1980" name="Proc. Natl. Acad. Sci. U.S.A.">
        <title>Mevinolin: a highly potent competitive inhibitor of hydroxymethylglutaryl-coenzyme A reductase and a cholesterol-lowering agent.</title>
        <authorList>
            <person name="Alberts A.W."/>
            <person name="Chen J."/>
            <person name="Kuron G."/>
            <person name="Hunt V."/>
            <person name="Huff J."/>
            <person name="Hoffman C."/>
            <person name="Rothrock J."/>
            <person name="Lopez M."/>
            <person name="Joshua H."/>
            <person name="Harris E."/>
            <person name="Patchett A."/>
            <person name="Monaghan R."/>
            <person name="Currie S."/>
            <person name="Stapley E."/>
            <person name="Albers-Schonberg G."/>
            <person name="Hensens O."/>
            <person name="Hirshfield J."/>
            <person name="Hoogsteen K."/>
            <person name="Liesch J."/>
            <person name="Springer J."/>
        </authorList>
    </citation>
    <scope>BIOTECHNOLOGY</scope>
</reference>
<reference key="4">
    <citation type="journal article" date="1999" name="Science">
        <title>Modulation of polyketide synthase activity by accessory proteins during lovastatin biosynthesis.</title>
        <authorList>
            <person name="Kennedy J."/>
            <person name="Auclair K."/>
            <person name="Kendrew S.G."/>
            <person name="Park C."/>
            <person name="Vederas J.C."/>
            <person name="Hutchinson C.R."/>
        </authorList>
    </citation>
    <scope>FUNCTION</scope>
    <scope>CATALYTIC ACTIVITY</scope>
    <scope>PATHWAY</scope>
</reference>
<reference key="5">
    <citation type="journal article" date="2003" name="Org. Biomol. Chem.">
        <title>Transformations of cyclic nonaketides by Aspergillus terreus mutants blocked for lovastatin biosynthesis at the lovA and lovC genes.</title>
        <authorList>
            <person name="Sorensen J.L."/>
            <person name="Auclair K."/>
            <person name="Kennedy J."/>
            <person name="Hutchinson C.R."/>
            <person name="Vederas J.C."/>
        </authorList>
    </citation>
    <scope>FUNCTION</scope>
</reference>
<reference key="6">
    <citation type="journal article" date="2006" name="Chem. Biol.">
        <title>Biosynthesis of lovastatin analogs with a broadly specific acyltransferase.</title>
        <authorList>
            <person name="Xie X."/>
            <person name="Watanabe K."/>
            <person name="Wojcicki W.A."/>
            <person name="Wang C.C."/>
            <person name="Tang Y."/>
        </authorList>
    </citation>
    <scope>FUNCTION</scope>
</reference>
<reference key="7">
    <citation type="journal article" date="2009" name="Biotechnol. Bioeng.">
        <title>Rational improvement of simvastatin synthase solubility in Escherichia coli leads to higher whole-cell biocatalytic activity.</title>
        <authorList>
            <person name="Xie X."/>
            <person name="Pashkov I."/>
            <person name="Gao X."/>
            <person name="Guerrero J.L."/>
            <person name="Yeates T.O."/>
            <person name="Tang Y."/>
        </authorList>
    </citation>
    <scope>FUNCTION</scope>
</reference>
<reference key="8">
    <citation type="journal article" date="2009" name="Chem. Biol.">
        <title>Directed evolution and structural characterization of a simvastatin synthase.</title>
        <authorList>
            <person name="Gao X."/>
            <person name="Xie X."/>
            <person name="Pashkov I."/>
            <person name="Sawaya M.R."/>
            <person name="Laidman J."/>
            <person name="Zhang W."/>
            <person name="Cacho R."/>
            <person name="Yeates T.O."/>
            <person name="Tang Y."/>
        </authorList>
    </citation>
    <scope>FUNCTION</scope>
</reference>
<reference key="9">
    <citation type="journal article" date="2009" name="J. Am. Chem. Soc.">
        <title>Acyltransferase mediated polyketide release from a fungal megasynthase.</title>
        <authorList>
            <person name="Xie X."/>
            <person name="Meehan M.J."/>
            <person name="Xu W."/>
            <person name="Dorrestein P.C."/>
            <person name="Tang Y."/>
        </authorList>
    </citation>
    <scope>FUNCTION</scope>
</reference>
<reference key="10">
    <citation type="journal article" date="2009" name="Science">
        <title>Complete reconstitution of a highly reducing iterative polyketide synthase.</title>
        <authorList>
            <person name="Ma S.M."/>
            <person name="Li J.W."/>
            <person name="Choi J.W."/>
            <person name="Zhou H."/>
            <person name="Lee K.K."/>
            <person name="Moorthie V.A."/>
            <person name="Xie X."/>
            <person name="Kealey J.T."/>
            <person name="Da Silva N.A."/>
            <person name="Vederas J.C."/>
            <person name="Tang Y."/>
        </authorList>
    </citation>
    <scope>FUNCTION</scope>
    <scope>PATHWAY</scope>
    <scope>COFACTOR</scope>
    <scope>IDENTIFICATION BY MASS SPECTROMETRY</scope>
</reference>
<reference key="11">
    <citation type="journal article" date="2011" name="Biochemistry">
        <title>FT-ICR-MS characterization of intermediates in the biosynthesis of the alpha-methylbutyrate side chain of lovastatin by the 277 kDa polyketide synthase LovF.</title>
        <authorList>
            <person name="Meehan M.J."/>
            <person name="Xie X."/>
            <person name="Zhao X."/>
            <person name="Xu W."/>
            <person name="Tang Y."/>
            <person name="Dorrestein P.C."/>
        </authorList>
    </citation>
    <scope>FUNCTION</scope>
</reference>
<reference key="12">
    <citation type="journal article" date="2011" name="J. Am. Chem. Soc.">
        <title>Double oxidation of the cyclic nonaketide dihydromonacolin L to monacolin J by a single cytochrome P450 monooxygenase, LovA.</title>
        <authorList>
            <person name="Barriuso J."/>
            <person name="Nguyen D.T."/>
            <person name="Li J.W."/>
            <person name="Roberts J.N."/>
            <person name="MacNevin G."/>
            <person name="Chaytor J.L."/>
            <person name="Marcus S.L."/>
            <person name="Vederas J.C."/>
            <person name="Ro D.K."/>
        </authorList>
    </citation>
    <scope>FUNCTION</scope>
    <scope>CATALYTIC ACTIVITY</scope>
    <scope>SUBCELLULAR LOCATION</scope>
    <scope>BIOPHYSICOCHEMICAL PROPERTIES</scope>
</reference>
<reference key="13">
    <citation type="journal article" date="2012" name="Proc. Natl. Acad. Sci. U.S.A.">
        <title>Crystal structure and biochemical studies of the trans-acting polyketide enoyl reductase LovC from lovastatin biosynthesis.</title>
        <authorList>
            <person name="Ames B.D."/>
            <person name="Nguyen C."/>
            <person name="Bruegger J."/>
            <person name="Smith P."/>
            <person name="Xu W."/>
            <person name="Ma S."/>
            <person name="Wong E."/>
            <person name="Wong S."/>
            <person name="Xie X."/>
            <person name="Li J.W."/>
            <person name="Vederas J.C."/>
            <person name="Tang Y."/>
            <person name="Tsai S.C."/>
        </authorList>
    </citation>
    <scope>FUNCTION</scope>
    <scope>INTERACTION WITH LOVC</scope>
</reference>
<reference key="14">
    <citation type="journal article" date="2012" name="ChemBioChem">
        <title>Evolutionary imprint of catalytic domains in fungal PKS-NRPS hybrids.</title>
        <authorList>
            <person name="Boettger D."/>
            <person name="Bergmann H."/>
            <person name="Kuehn B."/>
            <person name="Shelest E."/>
            <person name="Hertweck C."/>
        </authorList>
    </citation>
    <scope>FUNCTION</scope>
    <scope>CATALYTIC ACTIVITY</scope>
    <scope>DOMAIN</scope>
</reference>
<reference key="15">
    <citation type="journal article" date="2013" name="Angew. Chem. Int. Ed. Engl.">
        <title>LovG: the thioesterase required for dihydromonacolin L release and lovastatin nonaketide synthase turnover in lovastatin biosynthesis.</title>
        <authorList>
            <person name="Xu W."/>
            <person name="Chooi Y.H."/>
            <person name="Choi J.W."/>
            <person name="Li S."/>
            <person name="Vederas J.C."/>
            <person name="Da Silva N.A."/>
            <person name="Tang Y."/>
        </authorList>
    </citation>
    <scope>FUNCTION</scope>
</reference>
<reference key="16">
    <citation type="journal article" date="2014" name="Nat. Chem. Biol.">
        <title>The role of distant mutations and allosteric regulation on LovD active site dynamics.</title>
        <authorList>
            <person name="Jimenez-Oses G."/>
            <person name="Osuna S."/>
            <person name="Gao X."/>
            <person name="Sawaya M.R."/>
            <person name="Gilson L."/>
            <person name="Collier S.J."/>
            <person name="Huisman G.W."/>
            <person name="Yeates T.O."/>
            <person name="Tang Y."/>
            <person name="Houk K.N."/>
        </authorList>
    </citation>
    <scope>FUNCTION</scope>
</reference>
<reference key="17">
    <citation type="journal article" date="2017" name="Int. J. Mol. Sci.">
        <title>Simvastatin inhibits cell proliferation and migration in human anaplastic thyroid cancer.</title>
        <authorList>
            <person name="Chen M.C."/>
            <person name="Tsai Y.C."/>
            <person name="Tseng J.H."/>
            <person name="Liou J.J."/>
            <person name="Horng S."/>
            <person name="Wen H.C."/>
            <person name="Fan Y.C."/>
            <person name="Zhong W.B."/>
            <person name="Hsu S.P."/>
        </authorList>
    </citation>
    <scope>BIOTECHNOLOGY</scope>
</reference>
<reference key="18">
    <citation type="journal article" date="2018" name="Int. J. Mol. Sci.">
        <title>A synergistic anti-cancer effect of troglitazone and lovastatin in a human anaplastic thyroid cancer cell line and in a mouse xenograft model.</title>
        <authorList>
            <person name="Zhong W.B."/>
            <person name="Tsai Y.C."/>
            <person name="Chin L.H."/>
            <person name="Tseng J.H."/>
            <person name="Tang L.W."/>
            <person name="Horng S."/>
            <person name="Fan Y.C."/>
            <person name="Hsu S.P."/>
        </authorList>
    </citation>
    <scope>BIOTECHNOLOGY</scope>
</reference>
<reference key="19">
    <citation type="journal article" date="2025" name="Microbiol. Res.">
        <title>Development of a landing pad system for Aspergillus niger and its application in the overproduction of monacolin J.</title>
        <authorList>
            <person name="Yao L."/>
            <person name="Zheng J."/>
            <person name="Wang B."/>
            <person name="Pan L."/>
        </authorList>
    </citation>
    <scope>FUNCTION</scope>
    <scope>PATHWAY</scope>
</reference>
<comment type="function">
    <text evidence="8 9 10 11 12 13 14 15 16 17 18 19 20 21 24">Lovastatin nonaketide synthase; part of the gene cluster that mediates the biosynthesis of lovastatin (also known as mevinolin, mevacor or monacolin K), a hypolipidemic inhibitor of (3S)-hydroxymethylglutaryl-coenzyme A (HMG-CoA) reductase (HMGR) (PubMed:10334994, PubMed:12929390, PubMed:21495633, PubMed:23023987, PubMed:39515266). The first step in the biosynthesis of lovastatin is the production of dihydromonacolin L acid by the lovastatin nonaketide synthase lovB and the trans-acting enoyl reductase lovC (called the lovB-lovC megasynthase complex) via condensation of one acetyl-CoA unit and 8 malonyl-CoA units (PubMed:10334994, PubMed:10381407, PubMed:19900898, PubMed:22733743, PubMed:23023987). Dihydromonacolin L acid is released from lovB by the thioesterase lovG (PubMed:23653178). Next, dihydromonacolin L acid is oxidized by the dihydromonacolin L monooxygenase lovA twice to form monacolin J acid (PubMed:12929390, PubMed:21495633). The 2-methylbutyrate moiety of lovastatin is synthesized by the lovastatin diketide synthase lovF via condensation of one acetyl-CoA unit and one malonyl-CoA unit (PubMed:19530726, PubMed:21069965). Finally, the covalent attachment of this moiety to monacolin J acid is catalyzed by the transesterase lovD to yield lovastatin (PubMed:10334994, PubMed:17113998, PubMed:18988191, PubMed:19875080, PubMed:24727900). LovD has broad substrate specificity and can also convert monacolin J to simvastatin using alpha-dimethylbutanoyl-S-methyl-3-mercaptopropionate (DMB-S-MMP) as the thioester acyl donor, and can also catalyze the reverse reaction and function as hydrolase in vitro (PubMed:19875080). LovD has much higher activity with LovF-bound 2-methylbutanoate than with free diketide substrates (PubMed:21069965).</text>
</comment>
<comment type="catalytic activity">
    <reaction evidence="8 9 19">
        <text>holo-[lovastatin nonaketide synthase] + 9 malonyl-CoA + S-adenosyl-L-methionine + 11 NADPH + 19 H(+) = dihydromonacolin L-[lovastatin nonaketide synthase] + S-adenosyl-L-homocysteine + 9 CO2 + 11 NADP(+) + 9 CoA + 6 H2O</text>
        <dbReference type="Rhea" id="RHEA:18565"/>
        <dbReference type="Rhea" id="RHEA-COMP:10042"/>
        <dbReference type="Rhea" id="RHEA-COMP:10043"/>
        <dbReference type="ChEBI" id="CHEBI:15377"/>
        <dbReference type="ChEBI" id="CHEBI:15378"/>
        <dbReference type="ChEBI" id="CHEBI:16526"/>
        <dbReference type="ChEBI" id="CHEBI:57287"/>
        <dbReference type="ChEBI" id="CHEBI:57384"/>
        <dbReference type="ChEBI" id="CHEBI:57783"/>
        <dbReference type="ChEBI" id="CHEBI:57856"/>
        <dbReference type="ChEBI" id="CHEBI:58349"/>
        <dbReference type="ChEBI" id="CHEBI:59789"/>
        <dbReference type="ChEBI" id="CHEBI:64479"/>
        <dbReference type="ChEBI" id="CHEBI:79032"/>
        <dbReference type="EC" id="2.3.1.161"/>
    </reaction>
    <physiologicalReaction direction="left-to-right" evidence="8 9 19">
        <dbReference type="Rhea" id="RHEA:18566"/>
    </physiologicalReaction>
</comment>
<comment type="cofactor">
    <cofactor evidence="15">
        <name>pantetheine 4'-phosphate</name>
        <dbReference type="ChEBI" id="CHEBI:47942"/>
    </cofactor>
    <text evidence="15">Binds 1 phosphopantetheine covalently.</text>
</comment>
<comment type="pathway">
    <text evidence="8 9 15 24">Polyketide biosynthesis; lovastatin biosynthesis.</text>
</comment>
<comment type="subunit">
    <text evidence="1 18">Homodimer (By similarity). Each MAT domain from the lovB homodimer binds one lovC molecule to form the final active lovB-lovC megasynthase complex (By similarity) (PubMed:22733743).</text>
</comment>
<comment type="domain">
    <text evidence="18 19">Multidomain protein; including a ketosynthase (KS) that catalyzes repeated decarboxylative condensation to elongate the polyketide backbone; a malonyl-CoA:ACP transacylase (MAT) that selects and transfers the extender unit malonyl-CoA; a dehydratase (DH) domain that reduces hydroxyl groups to enoyl groups; a methyltransferase (CMeT) domain responsible for the incorporation of methyl groups; a ketoreductase (KR) domain that catalyzes beta-ketoreduction steps; and an acyl-carrier protein (ACP) that serves as the tether of the growing and completed polyketide via its phosphopantetheinyl arm (PubMed:22733743). A C-terminal thioesterase (TE) domain that is often found in polyketide synthase proteins is not present in this protein, but lovB contains insteado a C-terminal condensation (C) domain that has lost its condensation activity, but has gained a novel function that is necessary for release of the final product (PubMed:23023987).</text>
</comment>
<comment type="domain">
    <text evidence="18">Lacks an enoylreductase (ER) domain that reduces enoyl groups to alkyl group which function is performed by the trans-acting enoyl reductase lovC.</text>
</comment>
<comment type="biotechnology">
    <text evidence="22 23 25">Lovastatin acts as a hypolipidemic agent that works as inhibitor of (3S)-hydroxymethylglutaryl-coenzyme A (HMG-CoA) reductase (HMGR) which reduces HMG-CoA to mevalonate and is the key step in cholesterol biosynthesis (PubMed:6933445). Lovastatin, simvastatin and related compounds are widely used to treat hypercholesteremia and reduce the risk of cardiovascular disease (PubMed:6933445). Furthermore, statins such as lovastatin were found to be anticancer agents (PubMed:29236027, PubMed:29932104).</text>
</comment>
<comment type="sequence caution" evidence="26">
    <conflict type="erroneous gene model prediction">
        <sequence resource="EMBL-CDS" id="EAU29410"/>
    </conflict>
</comment>